<feature type="chain" id="PRO_0000110645" description="UPF0358 protein GK1077">
    <location>
        <begin position="1"/>
        <end position="95"/>
    </location>
</feature>
<name>Y1077_GEOKA</name>
<evidence type="ECO:0000255" key="1">
    <source>
        <dbReference type="HAMAP-Rule" id="MF_01560"/>
    </source>
</evidence>
<keyword id="KW-1185">Reference proteome</keyword>
<proteinExistence type="inferred from homology"/>
<protein>
    <recommendedName>
        <fullName evidence="1">UPF0358 protein GK1077</fullName>
    </recommendedName>
</protein>
<reference key="1">
    <citation type="journal article" date="2004" name="Nucleic Acids Res.">
        <title>Thermoadaptation trait revealed by the genome sequence of thermophilic Geobacillus kaustophilus.</title>
        <authorList>
            <person name="Takami H."/>
            <person name="Takaki Y."/>
            <person name="Chee G.-J."/>
            <person name="Nishi S."/>
            <person name="Shimamura S."/>
            <person name="Suzuki H."/>
            <person name="Matsui S."/>
            <person name="Uchiyama I."/>
        </authorList>
    </citation>
    <scope>NUCLEOTIDE SEQUENCE [LARGE SCALE GENOMIC DNA]</scope>
    <source>
        <strain>HTA426</strain>
    </source>
</reference>
<gene>
    <name type="ordered locus">GK1077</name>
</gene>
<organism>
    <name type="scientific">Geobacillus kaustophilus (strain HTA426)</name>
    <dbReference type="NCBI Taxonomy" id="235909"/>
    <lineage>
        <taxon>Bacteria</taxon>
        <taxon>Bacillati</taxon>
        <taxon>Bacillota</taxon>
        <taxon>Bacilli</taxon>
        <taxon>Bacillales</taxon>
        <taxon>Anoxybacillaceae</taxon>
        <taxon>Geobacillus</taxon>
        <taxon>Geobacillus thermoleovorans group</taxon>
    </lineage>
</organism>
<comment type="similarity">
    <text evidence="1">Belongs to the UPF0358 family.</text>
</comment>
<accession>Q5L118</accession>
<dbReference type="EMBL" id="BA000043">
    <property type="protein sequence ID" value="BAD75362.1"/>
    <property type="molecule type" value="Genomic_DNA"/>
</dbReference>
<dbReference type="RefSeq" id="WP_011230577.1">
    <property type="nucleotide sequence ID" value="NC_006510.1"/>
</dbReference>
<dbReference type="SMR" id="Q5L118"/>
<dbReference type="STRING" id="235909.GK1077"/>
<dbReference type="KEGG" id="gka:GK1077"/>
<dbReference type="eggNOG" id="COG4838">
    <property type="taxonomic scope" value="Bacteria"/>
</dbReference>
<dbReference type="HOGENOM" id="CLU_160493_1_0_9"/>
<dbReference type="Proteomes" id="UP000001172">
    <property type="component" value="Chromosome"/>
</dbReference>
<dbReference type="Gene3D" id="1.10.287.750">
    <property type="entry name" value="SO2669-like"/>
    <property type="match status" value="1"/>
</dbReference>
<dbReference type="HAMAP" id="MF_01560">
    <property type="entry name" value="UPF0358"/>
    <property type="match status" value="1"/>
</dbReference>
<dbReference type="InterPro" id="IPR009983">
    <property type="entry name" value="UPF0358"/>
</dbReference>
<dbReference type="InterPro" id="IPR036270">
    <property type="entry name" value="UPF0358_sf"/>
</dbReference>
<dbReference type="NCBIfam" id="NF010187">
    <property type="entry name" value="PRK13666.1"/>
    <property type="match status" value="1"/>
</dbReference>
<dbReference type="Pfam" id="PF07408">
    <property type="entry name" value="DUF1507"/>
    <property type="match status" value="1"/>
</dbReference>
<dbReference type="SUPFAM" id="SSF140404">
    <property type="entry name" value="EF2458-like"/>
    <property type="match status" value="1"/>
</dbReference>
<sequence length="95" mass="10967">MTDESMSYREKAYALLQADAEKIIQLIRVQMDHLTMPQCPVYEEVLDTQMFGLSREIDFAVRLGLVEAKDGKALLDRLERELSTLHEAVAKKRVR</sequence>